<reference key="1">
    <citation type="submission" date="2008-04" db="EMBL/GenBank/DDBJ databases">
        <title>Complete sequence of chromosome of Natranaerobius thermophilus JW/NM-WN-LF.</title>
        <authorList>
            <consortium name="US DOE Joint Genome Institute"/>
            <person name="Copeland A."/>
            <person name="Lucas S."/>
            <person name="Lapidus A."/>
            <person name="Glavina del Rio T."/>
            <person name="Dalin E."/>
            <person name="Tice H."/>
            <person name="Bruce D."/>
            <person name="Goodwin L."/>
            <person name="Pitluck S."/>
            <person name="Chertkov O."/>
            <person name="Brettin T."/>
            <person name="Detter J.C."/>
            <person name="Han C."/>
            <person name="Kuske C.R."/>
            <person name="Schmutz J."/>
            <person name="Larimer F."/>
            <person name="Land M."/>
            <person name="Hauser L."/>
            <person name="Kyrpides N."/>
            <person name="Lykidis A."/>
            <person name="Mesbah N.M."/>
            <person name="Wiegel J."/>
        </authorList>
    </citation>
    <scope>NUCLEOTIDE SEQUENCE [LARGE SCALE GENOMIC DNA]</scope>
    <source>
        <strain>ATCC BAA-1301 / DSM 18059 / JW/NM-WN-LF</strain>
    </source>
</reference>
<name>Y1142_NATTJ</name>
<accession>B2A1I5</accession>
<evidence type="ECO:0000255" key="1">
    <source>
        <dbReference type="HAMAP-Rule" id="MF_01830"/>
    </source>
</evidence>
<dbReference type="EC" id="4.2.1.-" evidence="1"/>
<dbReference type="EMBL" id="CP001034">
    <property type="protein sequence ID" value="ACB84725.1"/>
    <property type="molecule type" value="Genomic_DNA"/>
</dbReference>
<dbReference type="RefSeq" id="WP_012447600.1">
    <property type="nucleotide sequence ID" value="NC_010718.1"/>
</dbReference>
<dbReference type="SMR" id="B2A1I5"/>
<dbReference type="FunCoup" id="B2A1I5">
    <property type="interactions" value="7"/>
</dbReference>
<dbReference type="STRING" id="457570.Nther_1142"/>
<dbReference type="KEGG" id="nth:Nther_1142"/>
<dbReference type="eggNOG" id="COG4336">
    <property type="taxonomic scope" value="Bacteria"/>
</dbReference>
<dbReference type="HOGENOM" id="CLU_059759_0_0_9"/>
<dbReference type="InParanoid" id="B2A1I5"/>
<dbReference type="OrthoDB" id="149585at2"/>
<dbReference type="Proteomes" id="UP000001683">
    <property type="component" value="Chromosome"/>
</dbReference>
<dbReference type="GO" id="GO:0016829">
    <property type="term" value="F:lyase activity"/>
    <property type="evidence" value="ECO:0007669"/>
    <property type="project" value="UniProtKB-KW"/>
</dbReference>
<dbReference type="FunFam" id="3.30.2040.10:FF:000001">
    <property type="entry name" value="D-glutamate cyclase, mitochondrial"/>
    <property type="match status" value="1"/>
</dbReference>
<dbReference type="Gene3D" id="3.40.1640.10">
    <property type="entry name" value="PSTPO5379-like"/>
    <property type="match status" value="1"/>
</dbReference>
<dbReference type="Gene3D" id="3.30.2040.10">
    <property type="entry name" value="PSTPO5379-like domain"/>
    <property type="match status" value="1"/>
</dbReference>
<dbReference type="HAMAP" id="MF_01830">
    <property type="entry name" value="Hydro_lyase"/>
    <property type="match status" value="1"/>
</dbReference>
<dbReference type="InterPro" id="IPR009906">
    <property type="entry name" value="D-Glu_cyclase"/>
</dbReference>
<dbReference type="InterPro" id="IPR038021">
    <property type="entry name" value="Putative_hydro-lyase"/>
</dbReference>
<dbReference type="InterPro" id="IPR016938">
    <property type="entry name" value="UPF0317"/>
</dbReference>
<dbReference type="NCBIfam" id="NF003969">
    <property type="entry name" value="PRK05463.1"/>
    <property type="match status" value="1"/>
</dbReference>
<dbReference type="PANTHER" id="PTHR32022">
    <property type="entry name" value="D-GLUTAMATE CYCLASE, MITOCHONDRIAL"/>
    <property type="match status" value="1"/>
</dbReference>
<dbReference type="PANTHER" id="PTHR32022:SF10">
    <property type="entry name" value="D-GLUTAMATE CYCLASE, MITOCHONDRIAL"/>
    <property type="match status" value="1"/>
</dbReference>
<dbReference type="Pfam" id="PF07286">
    <property type="entry name" value="D-Glu_cyclase"/>
    <property type="match status" value="1"/>
</dbReference>
<dbReference type="PIRSF" id="PIRSF029755">
    <property type="entry name" value="UCP029755"/>
    <property type="match status" value="1"/>
</dbReference>
<dbReference type="SUPFAM" id="SSF160920">
    <property type="entry name" value="PSTPO5379-like"/>
    <property type="match status" value="1"/>
</dbReference>
<gene>
    <name type="ordered locus">Nther_1142</name>
</gene>
<protein>
    <recommendedName>
        <fullName evidence="1">Putative hydro-lyase Nther_1142</fullName>
        <ecNumber evidence="1">4.2.1.-</ecNumber>
    </recommendedName>
</protein>
<keyword id="KW-0456">Lyase</keyword>
<keyword id="KW-1185">Reference proteome</keyword>
<proteinExistence type="inferred from homology"/>
<feature type="chain" id="PRO_0000379847" description="Putative hydro-lyase Nther_1142">
    <location>
        <begin position="1"/>
        <end position="261"/>
    </location>
</feature>
<organism>
    <name type="scientific">Natranaerobius thermophilus (strain ATCC BAA-1301 / DSM 18059 / JW/NM-WN-LF)</name>
    <dbReference type="NCBI Taxonomy" id="457570"/>
    <lineage>
        <taxon>Bacteria</taxon>
        <taxon>Bacillati</taxon>
        <taxon>Bacillota</taxon>
        <taxon>Clostridia</taxon>
        <taxon>Natranaerobiales</taxon>
        <taxon>Natranaerobiaceae</taxon>
        <taxon>Natranaerobius</taxon>
    </lineage>
</organism>
<comment type="similarity">
    <text evidence="1">Belongs to the D-glutamate cyclase family.</text>
</comment>
<sequence length="261" mass="29710">MTWKQNETEIRQRIKEGQYDGPTTGLMNGFTQANLVILPQNLAYDFLLFCQRNPKPCPLLEVIDTGKYEPKETAPGKDLRTDLPRYYIYRDGVKSAEVTDINKYWTQDLVSFLLGCSFTFESFFLQRGVPVRHIEEGVNVPMYRTNIKCKDAGVFHGNMVVSMRPIPENKLTEAIQITSRFPAVHGAPIHIGSPEKIGIKDLDSPDFGNRVNVESGEIPVFWACGVTPQAVIMNYRPEFVITHAPGHMFITDKKDMDYFQL</sequence>